<gene>
    <name evidence="1" type="primary">menD</name>
    <name type="ordered locus">Ssed_0226</name>
</gene>
<dbReference type="EC" id="2.2.1.9" evidence="1"/>
<dbReference type="EMBL" id="CP000821">
    <property type="protein sequence ID" value="ABV34839.1"/>
    <property type="molecule type" value="Genomic_DNA"/>
</dbReference>
<dbReference type="RefSeq" id="WP_012004365.1">
    <property type="nucleotide sequence ID" value="NC_009831.1"/>
</dbReference>
<dbReference type="SMR" id="A8FPR6"/>
<dbReference type="STRING" id="425104.Ssed_0226"/>
<dbReference type="KEGG" id="sse:Ssed_0226"/>
<dbReference type="eggNOG" id="COG1165">
    <property type="taxonomic scope" value="Bacteria"/>
</dbReference>
<dbReference type="HOGENOM" id="CLU_006051_3_0_6"/>
<dbReference type="OrthoDB" id="9791859at2"/>
<dbReference type="UniPathway" id="UPA00079"/>
<dbReference type="UniPathway" id="UPA01057">
    <property type="reaction ID" value="UER00164"/>
</dbReference>
<dbReference type="Proteomes" id="UP000002015">
    <property type="component" value="Chromosome"/>
</dbReference>
<dbReference type="GO" id="GO:0070204">
    <property type="term" value="F:2-succinyl-5-enolpyruvyl-6-hydroxy-3-cyclohexene-1-carboxylic-acid synthase activity"/>
    <property type="evidence" value="ECO:0007669"/>
    <property type="project" value="UniProtKB-UniRule"/>
</dbReference>
<dbReference type="GO" id="GO:0000287">
    <property type="term" value="F:magnesium ion binding"/>
    <property type="evidence" value="ECO:0007669"/>
    <property type="project" value="UniProtKB-UniRule"/>
</dbReference>
<dbReference type="GO" id="GO:0030145">
    <property type="term" value="F:manganese ion binding"/>
    <property type="evidence" value="ECO:0007669"/>
    <property type="project" value="UniProtKB-UniRule"/>
</dbReference>
<dbReference type="GO" id="GO:0030976">
    <property type="term" value="F:thiamine pyrophosphate binding"/>
    <property type="evidence" value="ECO:0007669"/>
    <property type="project" value="UniProtKB-UniRule"/>
</dbReference>
<dbReference type="GO" id="GO:0009234">
    <property type="term" value="P:menaquinone biosynthetic process"/>
    <property type="evidence" value="ECO:0007669"/>
    <property type="project" value="UniProtKB-UniRule"/>
</dbReference>
<dbReference type="CDD" id="cd07037">
    <property type="entry name" value="TPP_PYR_MenD"/>
    <property type="match status" value="1"/>
</dbReference>
<dbReference type="CDD" id="cd02009">
    <property type="entry name" value="TPP_SHCHC_synthase"/>
    <property type="match status" value="1"/>
</dbReference>
<dbReference type="Gene3D" id="3.40.50.970">
    <property type="match status" value="2"/>
</dbReference>
<dbReference type="Gene3D" id="3.40.50.1220">
    <property type="entry name" value="TPP-binding domain"/>
    <property type="match status" value="1"/>
</dbReference>
<dbReference type="HAMAP" id="MF_01659">
    <property type="entry name" value="MenD"/>
    <property type="match status" value="1"/>
</dbReference>
<dbReference type="InterPro" id="IPR004433">
    <property type="entry name" value="MenaQ_synth_MenD"/>
</dbReference>
<dbReference type="InterPro" id="IPR032264">
    <property type="entry name" value="MenD_middle"/>
</dbReference>
<dbReference type="InterPro" id="IPR029061">
    <property type="entry name" value="THDP-binding"/>
</dbReference>
<dbReference type="InterPro" id="IPR012001">
    <property type="entry name" value="Thiamin_PyroP_enz_TPP-bd_dom"/>
</dbReference>
<dbReference type="InterPro" id="IPR011766">
    <property type="entry name" value="TPP_enzyme_TPP-bd"/>
</dbReference>
<dbReference type="NCBIfam" id="TIGR00173">
    <property type="entry name" value="menD"/>
    <property type="match status" value="1"/>
</dbReference>
<dbReference type="PANTHER" id="PTHR42916">
    <property type="entry name" value="2-SUCCINYL-5-ENOLPYRUVYL-6-HYDROXY-3-CYCLOHEXENE-1-CARBOXYLATE SYNTHASE"/>
    <property type="match status" value="1"/>
</dbReference>
<dbReference type="PANTHER" id="PTHR42916:SF1">
    <property type="entry name" value="PROTEIN PHYLLO, CHLOROPLASTIC"/>
    <property type="match status" value="1"/>
</dbReference>
<dbReference type="Pfam" id="PF02775">
    <property type="entry name" value="TPP_enzyme_C"/>
    <property type="match status" value="1"/>
</dbReference>
<dbReference type="Pfam" id="PF16582">
    <property type="entry name" value="TPP_enzyme_M_2"/>
    <property type="match status" value="1"/>
</dbReference>
<dbReference type="Pfam" id="PF02776">
    <property type="entry name" value="TPP_enzyme_N"/>
    <property type="match status" value="1"/>
</dbReference>
<dbReference type="PIRSF" id="PIRSF004983">
    <property type="entry name" value="MenD"/>
    <property type="match status" value="1"/>
</dbReference>
<dbReference type="SUPFAM" id="SSF52518">
    <property type="entry name" value="Thiamin diphosphate-binding fold (THDP-binding)"/>
    <property type="match status" value="2"/>
</dbReference>
<sequence length="569" mass="62637">MQIDKTAELNLLWGTLILEELSRLGVQHVCMAPGSRSTPLTLAAAKQSKLKQHLHFDERGLGFMALGLAKTSHAPVAIITTSGTAVANLYPAIIEAWLTQVPLVVLSGDRPPELIDCGANQAIIQPALFAQYAKQINLPTPDIAIRPEALLTMLDEAISNQSLPVHINCMFREPLYPSTMSADFTQYLSTLGNWQHTTSPFNQYGKTSQHSLPTQDSLARFVHGKGVIIAGTLSPQESPEILVELSQKLGWPLLTDAQSQLRQHSGVIGNVDQLLHQPKARALLAQAESVLVFGGRLLSKRLINFLSEQKWKRYWQVLPQQMRLDPSHSAKQVWHSSVAAFASQAWPRSSDANWALQLIQFNDGLETLFQQQIDNAEFGEAMVVRAIAKAQNRQSQLFIGNSLPVRLYDMYAPITPDYPRTYTNRGASGIDGLLATACGVAKHEGKATTLLIGDISQLHDLNSLAIARTIESPFVIVILNNDGGNIFNLLPVPDEKLRSDYYRLAHGLEFGYGAAMFGLAYNRVDDFESFNEAYQEAIAFQGPSVIEVSVAQHQASEQIASIATWVKQS</sequence>
<reference key="1">
    <citation type="submission" date="2007-08" db="EMBL/GenBank/DDBJ databases">
        <title>Complete sequence of Shewanella sediminis HAW-EB3.</title>
        <authorList>
            <consortium name="US DOE Joint Genome Institute"/>
            <person name="Copeland A."/>
            <person name="Lucas S."/>
            <person name="Lapidus A."/>
            <person name="Barry K."/>
            <person name="Glavina del Rio T."/>
            <person name="Dalin E."/>
            <person name="Tice H."/>
            <person name="Pitluck S."/>
            <person name="Chertkov O."/>
            <person name="Brettin T."/>
            <person name="Bruce D."/>
            <person name="Detter J.C."/>
            <person name="Han C."/>
            <person name="Schmutz J."/>
            <person name="Larimer F."/>
            <person name="Land M."/>
            <person name="Hauser L."/>
            <person name="Kyrpides N."/>
            <person name="Kim E."/>
            <person name="Zhao J.-S."/>
            <person name="Richardson P."/>
        </authorList>
    </citation>
    <scope>NUCLEOTIDE SEQUENCE [LARGE SCALE GENOMIC DNA]</scope>
    <source>
        <strain>HAW-EB3</strain>
    </source>
</reference>
<name>MEND_SHESH</name>
<proteinExistence type="inferred from homology"/>
<evidence type="ECO:0000255" key="1">
    <source>
        <dbReference type="HAMAP-Rule" id="MF_01659"/>
    </source>
</evidence>
<comment type="function">
    <text evidence="1">Catalyzes the thiamine diphosphate-dependent decarboxylation of 2-oxoglutarate and the subsequent addition of the resulting succinic semialdehyde-thiamine pyrophosphate anion to isochorismate to yield 2-succinyl-5-enolpyruvyl-6-hydroxy-3-cyclohexene-1-carboxylate (SEPHCHC).</text>
</comment>
<comment type="catalytic activity">
    <reaction evidence="1">
        <text>isochorismate + 2-oxoglutarate + H(+) = 5-enolpyruvoyl-6-hydroxy-2-succinyl-cyclohex-3-ene-1-carboxylate + CO2</text>
        <dbReference type="Rhea" id="RHEA:25593"/>
        <dbReference type="ChEBI" id="CHEBI:15378"/>
        <dbReference type="ChEBI" id="CHEBI:16526"/>
        <dbReference type="ChEBI" id="CHEBI:16810"/>
        <dbReference type="ChEBI" id="CHEBI:29780"/>
        <dbReference type="ChEBI" id="CHEBI:58818"/>
        <dbReference type="EC" id="2.2.1.9"/>
    </reaction>
</comment>
<comment type="cofactor">
    <cofactor evidence="1">
        <name>Mg(2+)</name>
        <dbReference type="ChEBI" id="CHEBI:18420"/>
    </cofactor>
    <cofactor evidence="1">
        <name>Mn(2+)</name>
        <dbReference type="ChEBI" id="CHEBI:29035"/>
    </cofactor>
</comment>
<comment type="cofactor">
    <cofactor evidence="1">
        <name>thiamine diphosphate</name>
        <dbReference type="ChEBI" id="CHEBI:58937"/>
    </cofactor>
    <text evidence="1">Binds 1 thiamine pyrophosphate per subunit.</text>
</comment>
<comment type="pathway">
    <text evidence="1">Quinol/quinone metabolism; 1,4-dihydroxy-2-naphthoate biosynthesis; 1,4-dihydroxy-2-naphthoate from chorismate: step 2/7.</text>
</comment>
<comment type="pathway">
    <text evidence="1">Quinol/quinone metabolism; menaquinone biosynthesis.</text>
</comment>
<comment type="subunit">
    <text evidence="1">Homodimer.</text>
</comment>
<comment type="similarity">
    <text evidence="1">Belongs to the TPP enzyme family. MenD subfamily.</text>
</comment>
<organism>
    <name type="scientific">Shewanella sediminis (strain HAW-EB3)</name>
    <dbReference type="NCBI Taxonomy" id="425104"/>
    <lineage>
        <taxon>Bacteria</taxon>
        <taxon>Pseudomonadati</taxon>
        <taxon>Pseudomonadota</taxon>
        <taxon>Gammaproteobacteria</taxon>
        <taxon>Alteromonadales</taxon>
        <taxon>Shewanellaceae</taxon>
        <taxon>Shewanella</taxon>
    </lineage>
</organism>
<accession>A8FPR6</accession>
<feature type="chain" id="PRO_0000341837" description="2-succinyl-5-enolpyruvyl-6-hydroxy-3-cyclohexene-1-carboxylate synthase">
    <location>
        <begin position="1"/>
        <end position="569"/>
    </location>
</feature>
<keyword id="KW-0460">Magnesium</keyword>
<keyword id="KW-0464">Manganese</keyword>
<keyword id="KW-0474">Menaquinone biosynthesis</keyword>
<keyword id="KW-0479">Metal-binding</keyword>
<keyword id="KW-1185">Reference proteome</keyword>
<keyword id="KW-0786">Thiamine pyrophosphate</keyword>
<keyword id="KW-0808">Transferase</keyword>
<protein>
    <recommendedName>
        <fullName evidence="1">2-succinyl-5-enolpyruvyl-6-hydroxy-3-cyclohexene-1-carboxylate synthase</fullName>
        <shortName evidence="1">SEPHCHC synthase</shortName>
        <ecNumber evidence="1">2.2.1.9</ecNumber>
    </recommendedName>
    <alternativeName>
        <fullName evidence="1">Menaquinone biosynthesis protein MenD</fullName>
    </alternativeName>
</protein>